<evidence type="ECO:0000255" key="1">
    <source>
        <dbReference type="HAMAP-Rule" id="MF_01316"/>
    </source>
</evidence>
<evidence type="ECO:0000269" key="2">
    <source>
    </source>
</evidence>
<evidence type="ECO:0000269" key="3">
    <source>
    </source>
</evidence>
<evidence type="ECO:0000269" key="4">
    <source>
    </source>
</evidence>
<evidence type="ECO:0000269" key="5">
    <source>
    </source>
</evidence>
<evidence type="ECO:0000269" key="6">
    <source>
    </source>
</evidence>
<evidence type="ECO:0000269" key="7">
    <source ref="1"/>
</evidence>
<evidence type="ECO:0007829" key="8">
    <source>
        <dbReference type="PDB" id="5B66"/>
    </source>
</evidence>
<dbReference type="PIR" id="S05032">
    <property type="entry name" value="S05032"/>
</dbReference>
<dbReference type="PDB" id="3A0B">
    <property type="method" value="X-ray"/>
    <property type="resolution" value="3.70 A"/>
    <property type="chains" value="I/i=1-35"/>
</dbReference>
<dbReference type="PDB" id="3A0H">
    <property type="method" value="X-ray"/>
    <property type="resolution" value="4.00 A"/>
    <property type="chains" value="I/i=1-35"/>
</dbReference>
<dbReference type="PDB" id="3WU2">
    <property type="method" value="X-ray"/>
    <property type="resolution" value="1.90 A"/>
    <property type="chains" value="I/i=1-38"/>
</dbReference>
<dbReference type="PDB" id="4IL6">
    <property type="method" value="X-ray"/>
    <property type="resolution" value="2.10 A"/>
    <property type="chains" value="I/i=1-36"/>
</dbReference>
<dbReference type="PDB" id="4UB6">
    <property type="method" value="X-ray"/>
    <property type="resolution" value="1.95 A"/>
    <property type="chains" value="I/i=1-38"/>
</dbReference>
<dbReference type="PDB" id="4UB8">
    <property type="method" value="X-ray"/>
    <property type="resolution" value="1.95 A"/>
    <property type="chains" value="I/i=1-38"/>
</dbReference>
<dbReference type="PDB" id="5B5E">
    <property type="method" value="X-ray"/>
    <property type="resolution" value="1.87 A"/>
    <property type="chains" value="I/i=1-38"/>
</dbReference>
<dbReference type="PDB" id="5B66">
    <property type="method" value="X-ray"/>
    <property type="resolution" value="1.85 A"/>
    <property type="chains" value="I/i=1-38"/>
</dbReference>
<dbReference type="PDB" id="5GTH">
    <property type="method" value="X-ray"/>
    <property type="resolution" value="2.50 A"/>
    <property type="chains" value="I/i=1-38"/>
</dbReference>
<dbReference type="PDB" id="5GTI">
    <property type="method" value="X-ray"/>
    <property type="resolution" value="2.50 A"/>
    <property type="chains" value="I/i=1-38"/>
</dbReference>
<dbReference type="PDB" id="5V2C">
    <property type="method" value="X-ray"/>
    <property type="resolution" value="1.90 A"/>
    <property type="chains" value="I/i=1-38"/>
</dbReference>
<dbReference type="PDB" id="5WS5">
    <property type="method" value="X-ray"/>
    <property type="resolution" value="2.35 A"/>
    <property type="chains" value="I/i=1-38"/>
</dbReference>
<dbReference type="PDB" id="5WS6">
    <property type="method" value="X-ray"/>
    <property type="resolution" value="2.35 A"/>
    <property type="chains" value="I/i=1-38"/>
</dbReference>
<dbReference type="PDB" id="6JLJ">
    <property type="method" value="X-ray"/>
    <property type="resolution" value="2.15 A"/>
    <property type="chains" value="I/i=1-38"/>
</dbReference>
<dbReference type="PDB" id="6JLK">
    <property type="method" value="X-ray"/>
    <property type="resolution" value="2.15 A"/>
    <property type="chains" value="I/i=1-38"/>
</dbReference>
<dbReference type="PDB" id="6JLL">
    <property type="method" value="X-ray"/>
    <property type="resolution" value="2.15 A"/>
    <property type="chains" value="I/i=1-38"/>
</dbReference>
<dbReference type="PDB" id="6JLM">
    <property type="method" value="X-ray"/>
    <property type="resolution" value="2.35 A"/>
    <property type="chains" value="I/i=1-38"/>
</dbReference>
<dbReference type="PDB" id="6JLN">
    <property type="method" value="X-ray"/>
    <property type="resolution" value="2.40 A"/>
    <property type="chains" value="I/i=1-38"/>
</dbReference>
<dbReference type="PDB" id="6JLO">
    <property type="method" value="X-ray"/>
    <property type="resolution" value="2.40 A"/>
    <property type="chains" value="I/i=1-38"/>
</dbReference>
<dbReference type="PDB" id="6JLP">
    <property type="method" value="X-ray"/>
    <property type="resolution" value="2.50 A"/>
    <property type="chains" value="I/i=1-38"/>
</dbReference>
<dbReference type="PDB" id="7CJI">
    <property type="method" value="X-ray"/>
    <property type="resolution" value="2.35 A"/>
    <property type="chains" value="I/i=1-38"/>
</dbReference>
<dbReference type="PDB" id="7CJJ">
    <property type="method" value="X-ray"/>
    <property type="resolution" value="2.40 A"/>
    <property type="chains" value="I/i=1-38"/>
</dbReference>
<dbReference type="PDB" id="7COU">
    <property type="method" value="X-ray"/>
    <property type="resolution" value="2.25 A"/>
    <property type="chains" value="I/i=1-38"/>
</dbReference>
<dbReference type="PDB" id="7CZL">
    <property type="method" value="EM"/>
    <property type="resolution" value="3.78 A"/>
    <property type="chains" value="I/i=1-34"/>
</dbReference>
<dbReference type="PDB" id="7D1T">
    <property type="method" value="EM"/>
    <property type="resolution" value="1.95 A"/>
    <property type="chains" value="I/i=1-36"/>
</dbReference>
<dbReference type="PDB" id="7D1U">
    <property type="method" value="EM"/>
    <property type="resolution" value="2.08 A"/>
    <property type="chains" value="I/i=1-36"/>
</dbReference>
<dbReference type="PDB" id="7DXA">
    <property type="method" value="EM"/>
    <property type="resolution" value="3.14 A"/>
    <property type="chains" value="i=1-38"/>
</dbReference>
<dbReference type="PDB" id="7DXH">
    <property type="method" value="EM"/>
    <property type="resolution" value="3.14 A"/>
    <property type="chains" value="i=1-38"/>
</dbReference>
<dbReference type="PDB" id="7EDA">
    <property type="method" value="EM"/>
    <property type="resolution" value="2.78 A"/>
    <property type="chains" value="I=1-38"/>
</dbReference>
<dbReference type="PDB" id="8GN0">
    <property type="method" value="X-ray"/>
    <property type="resolution" value="2.15 A"/>
    <property type="chains" value="I/i=1-38"/>
</dbReference>
<dbReference type="PDB" id="8GN1">
    <property type="method" value="X-ray"/>
    <property type="resolution" value="2.10 A"/>
    <property type="chains" value="I/i=1-38"/>
</dbReference>
<dbReference type="PDB" id="8GN2">
    <property type="method" value="X-ray"/>
    <property type="resolution" value="1.95 A"/>
    <property type="chains" value="I/i=1-38"/>
</dbReference>
<dbReference type="PDB" id="8IR5">
    <property type="method" value="X-ray"/>
    <property type="resolution" value="2.15 A"/>
    <property type="chains" value="I/i=1-38"/>
</dbReference>
<dbReference type="PDB" id="8IR6">
    <property type="method" value="X-ray"/>
    <property type="resolution" value="2.20 A"/>
    <property type="chains" value="I/i=1-38"/>
</dbReference>
<dbReference type="PDB" id="8IR7">
    <property type="method" value="X-ray"/>
    <property type="resolution" value="2.25 A"/>
    <property type="chains" value="I/i=1-38"/>
</dbReference>
<dbReference type="PDB" id="8IR8">
    <property type="method" value="X-ray"/>
    <property type="resolution" value="2.25 A"/>
    <property type="chains" value="I/i=1-38"/>
</dbReference>
<dbReference type="PDB" id="8IR9">
    <property type="method" value="X-ray"/>
    <property type="resolution" value="2.20 A"/>
    <property type="chains" value="I/i=1-38"/>
</dbReference>
<dbReference type="PDB" id="8IRA">
    <property type="method" value="X-ray"/>
    <property type="resolution" value="2.20 A"/>
    <property type="chains" value="I/i=1-38"/>
</dbReference>
<dbReference type="PDB" id="8IRB">
    <property type="method" value="X-ray"/>
    <property type="resolution" value="2.30 A"/>
    <property type="chains" value="I/i=1-38"/>
</dbReference>
<dbReference type="PDB" id="8IRC">
    <property type="method" value="X-ray"/>
    <property type="resolution" value="2.25 A"/>
    <property type="chains" value="I/i=1-38"/>
</dbReference>
<dbReference type="PDB" id="8IRD">
    <property type="method" value="X-ray"/>
    <property type="resolution" value="2.30 A"/>
    <property type="chains" value="I/i=1-38"/>
</dbReference>
<dbReference type="PDB" id="8IRE">
    <property type="method" value="X-ray"/>
    <property type="resolution" value="2.25 A"/>
    <property type="chains" value="I/i=1-38"/>
</dbReference>
<dbReference type="PDB" id="8IRF">
    <property type="method" value="X-ray"/>
    <property type="resolution" value="2.25 A"/>
    <property type="chains" value="I/i=1-38"/>
</dbReference>
<dbReference type="PDB" id="8IRG">
    <property type="method" value="X-ray"/>
    <property type="resolution" value="2.30 A"/>
    <property type="chains" value="I/i=1-38"/>
</dbReference>
<dbReference type="PDB" id="8IRH">
    <property type="method" value="X-ray"/>
    <property type="resolution" value="2.25 A"/>
    <property type="chains" value="I/i=1-38"/>
</dbReference>
<dbReference type="PDB" id="8IRI">
    <property type="method" value="X-ray"/>
    <property type="resolution" value="2.25 A"/>
    <property type="chains" value="I/i=1-38"/>
</dbReference>
<dbReference type="PDBsum" id="3A0B"/>
<dbReference type="PDBsum" id="3A0H"/>
<dbReference type="PDBsum" id="3WU2"/>
<dbReference type="PDBsum" id="4IL6"/>
<dbReference type="PDBsum" id="4UB6"/>
<dbReference type="PDBsum" id="4UB8"/>
<dbReference type="PDBsum" id="5B5E"/>
<dbReference type="PDBsum" id="5B66"/>
<dbReference type="PDBsum" id="5GTH"/>
<dbReference type="PDBsum" id="5GTI"/>
<dbReference type="PDBsum" id="5V2C"/>
<dbReference type="PDBsum" id="5WS5"/>
<dbReference type="PDBsum" id="5WS6"/>
<dbReference type="PDBsum" id="6JLJ"/>
<dbReference type="PDBsum" id="6JLK"/>
<dbReference type="PDBsum" id="6JLL"/>
<dbReference type="PDBsum" id="6JLM"/>
<dbReference type="PDBsum" id="6JLN"/>
<dbReference type="PDBsum" id="6JLO"/>
<dbReference type="PDBsum" id="6JLP"/>
<dbReference type="PDBsum" id="7CJI"/>
<dbReference type="PDBsum" id="7CJJ"/>
<dbReference type="PDBsum" id="7COU"/>
<dbReference type="PDBsum" id="7CZL"/>
<dbReference type="PDBsum" id="7D1T"/>
<dbReference type="PDBsum" id="7D1U"/>
<dbReference type="PDBsum" id="7DXA"/>
<dbReference type="PDBsum" id="7DXH"/>
<dbReference type="PDBsum" id="7EDA"/>
<dbReference type="PDBsum" id="8GN0"/>
<dbReference type="PDBsum" id="8GN1"/>
<dbReference type="PDBsum" id="8GN2"/>
<dbReference type="PDBsum" id="8IR5"/>
<dbReference type="PDBsum" id="8IR6"/>
<dbReference type="PDBsum" id="8IR7"/>
<dbReference type="PDBsum" id="8IR8"/>
<dbReference type="PDBsum" id="8IR9"/>
<dbReference type="PDBsum" id="8IRA"/>
<dbReference type="PDBsum" id="8IRB"/>
<dbReference type="PDBsum" id="8IRC"/>
<dbReference type="PDBsum" id="8IRD"/>
<dbReference type="PDBsum" id="8IRE"/>
<dbReference type="PDBsum" id="8IRF"/>
<dbReference type="PDBsum" id="8IRG"/>
<dbReference type="PDBsum" id="8IRH"/>
<dbReference type="PDBsum" id="8IRI"/>
<dbReference type="EMDB" id="EMD-30511"/>
<dbReference type="EMDB" id="EMD-30547"/>
<dbReference type="EMDB" id="EMD-30548"/>
<dbReference type="EMDB" id="EMD-30902"/>
<dbReference type="EMDB" id="EMD-30909"/>
<dbReference type="EMDB" id="EMD-31062"/>
<dbReference type="SMR" id="P12240"/>
<dbReference type="DIP" id="DIP-48866N"/>
<dbReference type="IntAct" id="P12240">
    <property type="interactions" value="1"/>
</dbReference>
<dbReference type="GO" id="GO:0009539">
    <property type="term" value="C:photosystem II reaction center"/>
    <property type="evidence" value="ECO:0007669"/>
    <property type="project" value="InterPro"/>
</dbReference>
<dbReference type="GO" id="GO:0031676">
    <property type="term" value="C:plasma membrane-derived thylakoid membrane"/>
    <property type="evidence" value="ECO:0007669"/>
    <property type="project" value="UniProtKB-SubCell"/>
</dbReference>
<dbReference type="GO" id="GO:0015979">
    <property type="term" value="P:photosynthesis"/>
    <property type="evidence" value="ECO:0007669"/>
    <property type="project" value="UniProtKB-UniRule"/>
</dbReference>
<dbReference type="HAMAP" id="MF_01316">
    <property type="entry name" value="PSII_PsbI"/>
    <property type="match status" value="1"/>
</dbReference>
<dbReference type="InterPro" id="IPR003686">
    <property type="entry name" value="PSII_PsbI"/>
</dbReference>
<dbReference type="InterPro" id="IPR037271">
    <property type="entry name" value="PSII_PsbI_sf"/>
</dbReference>
<dbReference type="NCBIfam" id="NF002735">
    <property type="entry name" value="PRK02655.1"/>
    <property type="match status" value="1"/>
</dbReference>
<dbReference type="PANTHER" id="PTHR35772">
    <property type="entry name" value="PHOTOSYSTEM II REACTION CENTER PROTEIN I"/>
    <property type="match status" value="1"/>
</dbReference>
<dbReference type="PANTHER" id="PTHR35772:SF1">
    <property type="entry name" value="PHOTOSYSTEM II REACTION CENTER PROTEIN I"/>
    <property type="match status" value="1"/>
</dbReference>
<dbReference type="Pfam" id="PF02532">
    <property type="entry name" value="PsbI"/>
    <property type="match status" value="1"/>
</dbReference>
<dbReference type="SUPFAM" id="SSF161041">
    <property type="entry name" value="Photosystem II reaction center protein I, PsbI"/>
    <property type="match status" value="1"/>
</dbReference>
<reference key="1">
    <citation type="journal article" date="1989" name="FEBS Lett.">
        <title>Identification of psbI and psbL gene products in cyanobacterial photosystem II reaction center preparation.</title>
        <authorList>
            <person name="Ikeuchi M."/>
            <person name="Koike H."/>
            <person name="Inoue Y."/>
        </authorList>
    </citation>
    <scope>PROTEIN SEQUENCE OF 1-29</scope>
</reference>
<reference key="2">
    <citation type="journal article" date="2002" name="Plant Cell Physiol.">
        <title>Low-molecular-mass polypeptide components of a photosystem II preparation from the thermophilic cyanobacterium Thermosynechococcus vulcanus.</title>
        <authorList>
            <person name="Kashino Y."/>
            <person name="Koike H."/>
            <person name="Yoshio M."/>
            <person name="Egashira H."/>
            <person name="Ikeuchi M."/>
            <person name="Pakrasi H.B."/>
            <person name="Satoh K."/>
        </authorList>
    </citation>
    <scope>PROTEIN SEQUENCE OF 1-13</scope>
    <scope>COMPOSITION OF PHOTOSYSTEM II</scope>
    <scope>SUBUNIT</scope>
</reference>
<reference key="3">
    <citation type="journal article" date="2003" name="Proc. Natl. Acad. Sci. U.S.A.">
        <title>Crystal structure of oxygen-evolving photosystem II from Thermosynechococcus vulcanus at 3.7-A resolution.</title>
        <authorList>
            <person name="Kamiya N."/>
            <person name="Shen J.-R."/>
        </authorList>
    </citation>
    <scope>X-RAY CRYSTALLOGRAPHY (3.70 ANGSTROMS) IN PHOTOSYSTEM II</scope>
    <scope>COFACTOR</scope>
    <scope>SUBUNIT</scope>
    <scope>SUBCELLULAR LOCATION</scope>
</reference>
<reference key="4">
    <citation type="journal article" date="2009" name="Proc. Natl. Acad. Sci. U.S.A.">
        <title>Location of chloride and its possible functions in oxygen-evolving photosystem II revealed by X-ray crystallography.</title>
        <authorList>
            <person name="Kawakami K."/>
            <person name="Umena Y."/>
            <person name="Kamiya N."/>
            <person name="Shen J.R."/>
        </authorList>
    </citation>
    <scope>X-RAY CRYSTALLOGRAPHY (3.7 ANGSTROMS) OF 1-35 IN PHOTOSYSTEM II</scope>
    <scope>FUNCTION</scope>
    <scope>COFACTOR</scope>
    <scope>SUBUNIT</scope>
    <scope>SUBCELLULAR LOCATION</scope>
</reference>
<reference key="5">
    <citation type="journal article" date="2011" name="Nature">
        <title>Crystal structure of oxygen-evolving photosystem II at a resolution of 1.9 A.</title>
        <authorList>
            <person name="Umena Y."/>
            <person name="Kawakami K."/>
            <person name="Shen J.R."/>
            <person name="Kamiya N."/>
        </authorList>
    </citation>
    <scope>X-RAY CRYSTALLOGRAPHY (1.9 ANGSTROMS) IN PHOTOSYSTEM II</scope>
    <scope>COFACTOR</scope>
    <scope>SUBUNIT</scope>
    <scope>SUBCELLULAR LOCATION</scope>
    <scope>TOPOLOGY</scope>
</reference>
<reference key="6">
    <citation type="journal article" date="2013" name="Proc. Natl. Acad. Sci. U.S.A.">
        <title>Structure of Sr-substituted photosystem II at 2.1 A resolution and its implications in the mechanism of water oxidation.</title>
        <authorList>
            <person name="Koua F.H."/>
            <person name="Umena Y."/>
            <person name="Kawakami K."/>
            <person name="Shen J.R."/>
        </authorList>
    </citation>
    <scope>X-RAY CRYSTALLOGRAPHY (2.1 ANGSTROMS) OF 1-36 IN PHOTOSYSTEM II</scope>
    <scope>FUNCTION</scope>
    <scope>COFACTOR</scope>
    <scope>SUBUNIT</scope>
    <scope>SUBCELLULAR LOCATION</scope>
</reference>
<proteinExistence type="evidence at protein level"/>
<name>PSBI_THEVL</name>
<feature type="chain" id="PRO_0000219662" description="Photosystem II reaction center protein I">
    <location>
        <begin position="1"/>
        <end position="38"/>
    </location>
</feature>
<feature type="topological domain" description="Lumenal" evidence="5">
    <location>
        <begin position="1"/>
        <end position="7"/>
    </location>
</feature>
<feature type="transmembrane region" description="Helical" evidence="5">
    <location>
        <begin position="8"/>
        <end position="24"/>
    </location>
</feature>
<feature type="topological domain" description="Cytoplasmic" evidence="5">
    <location>
        <begin position="25"/>
        <end position="38"/>
    </location>
</feature>
<feature type="modified residue" description="Blocked amino end (Met)" evidence="7">
    <location>
        <position position="1"/>
    </location>
</feature>
<feature type="helix" evidence="8">
    <location>
        <begin position="2"/>
        <end position="24"/>
    </location>
</feature>
<feature type="helix" evidence="8">
    <location>
        <begin position="27"/>
        <end position="29"/>
    </location>
</feature>
<feature type="strand" evidence="8">
    <location>
        <begin position="31"/>
        <end position="33"/>
    </location>
</feature>
<accession>P12240</accession>
<protein>
    <recommendedName>
        <fullName evidence="1">Photosystem II reaction center protein I</fullName>
        <shortName evidence="1">PSII-I</shortName>
    </recommendedName>
    <alternativeName>
        <fullName evidence="1">PSII 4.4 kDa protein</fullName>
    </alternativeName>
</protein>
<gene>
    <name evidence="1" type="primary">psbI</name>
</gene>
<keyword id="KW-0002">3D-structure</keyword>
<keyword id="KW-0903">Direct protein sequencing</keyword>
<keyword id="KW-0472">Membrane</keyword>
<keyword id="KW-0602">Photosynthesis</keyword>
<keyword id="KW-0604">Photosystem II</keyword>
<keyword id="KW-0674">Reaction center</keyword>
<keyword id="KW-0793">Thylakoid</keyword>
<keyword id="KW-0812">Transmembrane</keyword>
<keyword id="KW-1133">Transmembrane helix</keyword>
<sequence>METLKITVYIVVTFFVLLFVFGFLSGDPARNPKRKDLE</sequence>
<comment type="function">
    <text evidence="1 4 6">One of the components of the core complex of photosystem II (PSII), required for its stability and/or assembly. PSII is a light-driven water:plastoquinone oxidoreductase that uses light energy to abstract electrons from H(2)O, generating O(2) and a proton gradient subsequently used for ATP formation. It consists of a core antenna complex that captures photons, and an electron transfer chain that converts photonic excitation into a charge separation.</text>
</comment>
<comment type="cofactor">
    <text evidence="3 4 5 6">PSII binds multiple chlorophylls, carotenoids and specific lipids.</text>
</comment>
<comment type="subunit">
    <text evidence="1 2 3 4 5 6">PSII is composed of 1 copy each of membrane proteins PsbA, PsbB, PsbC, PsbD, PsbE, PsbF, PsbH, PsbI, PsbJ, PsbK, PsbL, PsbM, PsbT, PsbX, PsbY, PsbZ, Psb30/Ycf12, peripheral proteins PsbO, CyanoQ (PsbQ), PsbU, PsbV and a large number of cofactors. It forms dimeric complexes.</text>
</comment>
<comment type="subcellular location">
    <subcellularLocation>
        <location evidence="1 3 4 5 6">Cellular thylakoid membrane</location>
        <topology evidence="1 3 4 5 6">Single-pass membrane protein</topology>
    </subcellularLocation>
</comment>
<comment type="similarity">
    <text evidence="1">Belongs to the PsbI family.</text>
</comment>
<organism>
    <name type="scientific">Thermostichus vulcanus</name>
    <name type="common">Synechococcus vulcanus</name>
    <dbReference type="NCBI Taxonomy" id="32053"/>
    <lineage>
        <taxon>Bacteria</taxon>
        <taxon>Bacillati</taxon>
        <taxon>Cyanobacteriota</taxon>
        <taxon>Cyanophyceae</taxon>
        <taxon>Thermostichales</taxon>
        <taxon>Thermostichaceae</taxon>
        <taxon>Thermostichus</taxon>
    </lineage>
</organism>